<evidence type="ECO:0000255" key="1">
    <source>
        <dbReference type="HAMAP-Rule" id="MF_01371"/>
    </source>
</evidence>
<evidence type="ECO:0000305" key="2"/>
<dbReference type="EMBL" id="CP000771">
    <property type="protein sequence ID" value="ABS60967.1"/>
    <property type="molecule type" value="Genomic_DNA"/>
</dbReference>
<dbReference type="RefSeq" id="WP_011994280.1">
    <property type="nucleotide sequence ID" value="NC_009718.1"/>
</dbReference>
<dbReference type="SMR" id="A7HM34"/>
<dbReference type="STRING" id="381764.Fnod_1120"/>
<dbReference type="KEGG" id="fno:Fnod_1120"/>
<dbReference type="eggNOG" id="COG1841">
    <property type="taxonomic scope" value="Bacteria"/>
</dbReference>
<dbReference type="HOGENOM" id="CLU_131047_2_1_0"/>
<dbReference type="OrthoDB" id="9812790at2"/>
<dbReference type="Proteomes" id="UP000002415">
    <property type="component" value="Chromosome"/>
</dbReference>
<dbReference type="GO" id="GO:0022625">
    <property type="term" value="C:cytosolic large ribosomal subunit"/>
    <property type="evidence" value="ECO:0007669"/>
    <property type="project" value="TreeGrafter"/>
</dbReference>
<dbReference type="GO" id="GO:0003735">
    <property type="term" value="F:structural constituent of ribosome"/>
    <property type="evidence" value="ECO:0007669"/>
    <property type="project" value="InterPro"/>
</dbReference>
<dbReference type="GO" id="GO:0006412">
    <property type="term" value="P:translation"/>
    <property type="evidence" value="ECO:0007669"/>
    <property type="project" value="UniProtKB-UniRule"/>
</dbReference>
<dbReference type="CDD" id="cd01658">
    <property type="entry name" value="Ribosomal_L30"/>
    <property type="match status" value="1"/>
</dbReference>
<dbReference type="FunFam" id="3.30.1390.20:FF:000001">
    <property type="entry name" value="50S ribosomal protein L30"/>
    <property type="match status" value="1"/>
</dbReference>
<dbReference type="Gene3D" id="3.30.1390.20">
    <property type="entry name" value="Ribosomal protein L30, ferredoxin-like fold domain"/>
    <property type="match status" value="1"/>
</dbReference>
<dbReference type="HAMAP" id="MF_01371_B">
    <property type="entry name" value="Ribosomal_uL30_B"/>
    <property type="match status" value="1"/>
</dbReference>
<dbReference type="InterPro" id="IPR036919">
    <property type="entry name" value="Ribo_uL30_ferredoxin-like_sf"/>
</dbReference>
<dbReference type="InterPro" id="IPR005996">
    <property type="entry name" value="Ribosomal_uL30_bac-type"/>
</dbReference>
<dbReference type="InterPro" id="IPR016082">
    <property type="entry name" value="Ribosomal_uL30_ferredoxin-like"/>
</dbReference>
<dbReference type="NCBIfam" id="TIGR01308">
    <property type="entry name" value="rpmD_bact"/>
    <property type="match status" value="1"/>
</dbReference>
<dbReference type="PANTHER" id="PTHR15892:SF2">
    <property type="entry name" value="LARGE RIBOSOMAL SUBUNIT PROTEIN UL30M"/>
    <property type="match status" value="1"/>
</dbReference>
<dbReference type="PANTHER" id="PTHR15892">
    <property type="entry name" value="MITOCHONDRIAL RIBOSOMAL PROTEIN L30"/>
    <property type="match status" value="1"/>
</dbReference>
<dbReference type="Pfam" id="PF00327">
    <property type="entry name" value="Ribosomal_L30"/>
    <property type="match status" value="1"/>
</dbReference>
<dbReference type="PIRSF" id="PIRSF002211">
    <property type="entry name" value="Ribosomal_L30_bac-type"/>
    <property type="match status" value="1"/>
</dbReference>
<dbReference type="SUPFAM" id="SSF55129">
    <property type="entry name" value="Ribosomal protein L30p/L7e"/>
    <property type="match status" value="1"/>
</dbReference>
<feature type="chain" id="PRO_1000087250" description="Large ribosomal subunit protein uL30">
    <location>
        <begin position="1"/>
        <end position="61"/>
    </location>
</feature>
<comment type="subunit">
    <text evidence="1">Part of the 50S ribosomal subunit.</text>
</comment>
<comment type="similarity">
    <text evidence="1">Belongs to the universal ribosomal protein uL30 family.</text>
</comment>
<proteinExistence type="inferred from homology"/>
<keyword id="KW-1185">Reference proteome</keyword>
<keyword id="KW-0687">Ribonucleoprotein</keyword>
<keyword id="KW-0689">Ribosomal protein</keyword>
<protein>
    <recommendedName>
        <fullName evidence="1">Large ribosomal subunit protein uL30</fullName>
    </recommendedName>
    <alternativeName>
        <fullName evidence="2">50S ribosomal protein L30</fullName>
    </alternativeName>
</protein>
<organism>
    <name type="scientific">Fervidobacterium nodosum (strain ATCC 35602 / DSM 5306 / Rt17-B1)</name>
    <dbReference type="NCBI Taxonomy" id="381764"/>
    <lineage>
        <taxon>Bacteria</taxon>
        <taxon>Thermotogati</taxon>
        <taxon>Thermotogota</taxon>
        <taxon>Thermotogae</taxon>
        <taxon>Thermotogales</taxon>
        <taxon>Fervidobacteriaceae</taxon>
        <taxon>Fervidobacterium</taxon>
    </lineage>
</organism>
<gene>
    <name evidence="1" type="primary">rpmD</name>
    <name type="ordered locus">Fnod_1120</name>
</gene>
<sequence length="61" mass="7283">MKKLKITLVRSPIGYKYDQKDTVKRLGLRRMHYTVIKEDTPQIRGMVEKVKHLVKVEEVEE</sequence>
<reference key="1">
    <citation type="submission" date="2007-07" db="EMBL/GenBank/DDBJ databases">
        <title>Complete sequence of Fervidobacterium nodosum Rt17-B1.</title>
        <authorList>
            <consortium name="US DOE Joint Genome Institute"/>
            <person name="Copeland A."/>
            <person name="Lucas S."/>
            <person name="Lapidus A."/>
            <person name="Barry K."/>
            <person name="Glavina del Rio T."/>
            <person name="Dalin E."/>
            <person name="Tice H."/>
            <person name="Pitluck S."/>
            <person name="Saunders E."/>
            <person name="Brettin T."/>
            <person name="Bruce D."/>
            <person name="Detter J.C."/>
            <person name="Han C."/>
            <person name="Schmutz J."/>
            <person name="Larimer F."/>
            <person name="Land M."/>
            <person name="Hauser L."/>
            <person name="Kyrpides N."/>
            <person name="Mikhailova N."/>
            <person name="Nelson K."/>
            <person name="Gogarten J.P."/>
            <person name="Noll K."/>
            <person name="Richardson P."/>
        </authorList>
    </citation>
    <scope>NUCLEOTIDE SEQUENCE [LARGE SCALE GENOMIC DNA]</scope>
    <source>
        <strain>ATCC 35602 / DSM 5306 / Rt17-B1</strain>
    </source>
</reference>
<accession>A7HM34</accession>
<name>RL30_FERNB</name>